<dbReference type="EC" id="2.1.1.166" evidence="1"/>
<dbReference type="EMBL" id="BX640441">
    <property type="protein sequence ID" value="CAE31956.1"/>
    <property type="molecule type" value="Genomic_DNA"/>
</dbReference>
<dbReference type="RefSeq" id="WP_003809621.1">
    <property type="nucleotide sequence ID" value="NC_002927.3"/>
</dbReference>
<dbReference type="SMR" id="Q7WMD3"/>
<dbReference type="KEGG" id="bbr:BB1459"/>
<dbReference type="eggNOG" id="COG0293">
    <property type="taxonomic scope" value="Bacteria"/>
</dbReference>
<dbReference type="HOGENOM" id="CLU_009422_4_1_4"/>
<dbReference type="Proteomes" id="UP000001027">
    <property type="component" value="Chromosome"/>
</dbReference>
<dbReference type="GO" id="GO:0005737">
    <property type="term" value="C:cytoplasm"/>
    <property type="evidence" value="ECO:0007669"/>
    <property type="project" value="UniProtKB-SubCell"/>
</dbReference>
<dbReference type="GO" id="GO:0008650">
    <property type="term" value="F:rRNA (uridine-2'-O-)-methyltransferase activity"/>
    <property type="evidence" value="ECO:0007669"/>
    <property type="project" value="UniProtKB-UniRule"/>
</dbReference>
<dbReference type="CDD" id="cd02440">
    <property type="entry name" value="AdoMet_MTases"/>
    <property type="match status" value="1"/>
</dbReference>
<dbReference type="FunFam" id="3.40.50.150:FF:000005">
    <property type="entry name" value="Ribosomal RNA large subunit methyltransferase E"/>
    <property type="match status" value="1"/>
</dbReference>
<dbReference type="Gene3D" id="3.40.50.150">
    <property type="entry name" value="Vaccinia Virus protein VP39"/>
    <property type="match status" value="1"/>
</dbReference>
<dbReference type="HAMAP" id="MF_01547">
    <property type="entry name" value="RNA_methyltr_E"/>
    <property type="match status" value="1"/>
</dbReference>
<dbReference type="InterPro" id="IPR050082">
    <property type="entry name" value="RNA_methyltr_RlmE"/>
</dbReference>
<dbReference type="InterPro" id="IPR002877">
    <property type="entry name" value="RNA_MeTrfase_FtsJ_dom"/>
</dbReference>
<dbReference type="InterPro" id="IPR015507">
    <property type="entry name" value="rRNA-MeTfrase_E"/>
</dbReference>
<dbReference type="InterPro" id="IPR029063">
    <property type="entry name" value="SAM-dependent_MTases_sf"/>
</dbReference>
<dbReference type="PANTHER" id="PTHR10920">
    <property type="entry name" value="RIBOSOMAL RNA METHYLTRANSFERASE"/>
    <property type="match status" value="1"/>
</dbReference>
<dbReference type="PANTHER" id="PTHR10920:SF18">
    <property type="entry name" value="RRNA METHYLTRANSFERASE 2, MITOCHONDRIAL"/>
    <property type="match status" value="1"/>
</dbReference>
<dbReference type="Pfam" id="PF01728">
    <property type="entry name" value="FtsJ"/>
    <property type="match status" value="1"/>
</dbReference>
<dbReference type="PIRSF" id="PIRSF005461">
    <property type="entry name" value="23S_rRNA_mtase"/>
    <property type="match status" value="1"/>
</dbReference>
<dbReference type="SUPFAM" id="SSF53335">
    <property type="entry name" value="S-adenosyl-L-methionine-dependent methyltransferases"/>
    <property type="match status" value="1"/>
</dbReference>
<proteinExistence type="inferred from homology"/>
<accession>Q7WMD3</accession>
<sequence length="210" mass="23176">MAKNKFSKDWIHQHINDPYVKLAQQKGYRARAAFKLLEILDAEKLMRRGDIVVDLGSAPGSWSQVARERLAGPGGAVDGRIIALDLLPMEPVAGVEFIQGDFREEAVLEQLARMVEGQPVDLVISDMAPNLSGVGVADSARIQHVCELALEFACAHLKPNGALIVKAFHGSGFSQIVQSYKQRFKRVVERKPKASRDKSSETFLVARDLK</sequence>
<name>RLME_BORBR</name>
<protein>
    <recommendedName>
        <fullName evidence="1">Ribosomal RNA large subunit methyltransferase E</fullName>
        <ecNumber evidence="1">2.1.1.166</ecNumber>
    </recommendedName>
    <alternativeName>
        <fullName evidence="1">23S rRNA Um2552 methyltransferase</fullName>
    </alternativeName>
    <alternativeName>
        <fullName evidence="1">rRNA (uridine-2'-O-)-methyltransferase</fullName>
    </alternativeName>
</protein>
<organism>
    <name type="scientific">Bordetella bronchiseptica (strain ATCC BAA-588 / NCTC 13252 / RB50)</name>
    <name type="common">Alcaligenes bronchisepticus</name>
    <dbReference type="NCBI Taxonomy" id="257310"/>
    <lineage>
        <taxon>Bacteria</taxon>
        <taxon>Pseudomonadati</taxon>
        <taxon>Pseudomonadota</taxon>
        <taxon>Betaproteobacteria</taxon>
        <taxon>Burkholderiales</taxon>
        <taxon>Alcaligenaceae</taxon>
        <taxon>Bordetella</taxon>
    </lineage>
</organism>
<gene>
    <name evidence="1" type="primary">rlmE</name>
    <name evidence="1" type="synonym">ftsJ</name>
    <name evidence="1" type="synonym">rrmJ</name>
    <name type="ordered locus">BB1459</name>
</gene>
<feature type="chain" id="PRO_0000155472" description="Ribosomal RNA large subunit methyltransferase E">
    <location>
        <begin position="1"/>
        <end position="210"/>
    </location>
</feature>
<feature type="region of interest" description="Disordered" evidence="2">
    <location>
        <begin position="191"/>
        <end position="210"/>
    </location>
</feature>
<feature type="compositionally biased region" description="Basic and acidic residues" evidence="2">
    <location>
        <begin position="191"/>
        <end position="200"/>
    </location>
</feature>
<feature type="active site" description="Proton acceptor" evidence="1">
    <location>
        <position position="166"/>
    </location>
</feature>
<feature type="binding site" evidence="1">
    <location>
        <position position="60"/>
    </location>
    <ligand>
        <name>S-adenosyl-L-methionine</name>
        <dbReference type="ChEBI" id="CHEBI:59789"/>
    </ligand>
</feature>
<feature type="binding site" evidence="1">
    <location>
        <position position="62"/>
    </location>
    <ligand>
        <name>S-adenosyl-L-methionine</name>
        <dbReference type="ChEBI" id="CHEBI:59789"/>
    </ligand>
</feature>
<feature type="binding site" evidence="1">
    <location>
        <position position="85"/>
    </location>
    <ligand>
        <name>S-adenosyl-L-methionine</name>
        <dbReference type="ChEBI" id="CHEBI:59789"/>
    </ligand>
</feature>
<feature type="binding site" evidence="1">
    <location>
        <position position="101"/>
    </location>
    <ligand>
        <name>S-adenosyl-L-methionine</name>
        <dbReference type="ChEBI" id="CHEBI:59789"/>
    </ligand>
</feature>
<feature type="binding site" evidence="1">
    <location>
        <position position="126"/>
    </location>
    <ligand>
        <name>S-adenosyl-L-methionine</name>
        <dbReference type="ChEBI" id="CHEBI:59789"/>
    </ligand>
</feature>
<comment type="function">
    <text evidence="1">Specifically methylates the uridine in position 2552 of 23S rRNA at the 2'-O position of the ribose in the fully assembled 50S ribosomal subunit.</text>
</comment>
<comment type="catalytic activity">
    <reaction evidence="1">
        <text>uridine(2552) in 23S rRNA + S-adenosyl-L-methionine = 2'-O-methyluridine(2552) in 23S rRNA + S-adenosyl-L-homocysteine + H(+)</text>
        <dbReference type="Rhea" id="RHEA:42720"/>
        <dbReference type="Rhea" id="RHEA-COMP:10202"/>
        <dbReference type="Rhea" id="RHEA-COMP:10203"/>
        <dbReference type="ChEBI" id="CHEBI:15378"/>
        <dbReference type="ChEBI" id="CHEBI:57856"/>
        <dbReference type="ChEBI" id="CHEBI:59789"/>
        <dbReference type="ChEBI" id="CHEBI:65315"/>
        <dbReference type="ChEBI" id="CHEBI:74478"/>
        <dbReference type="EC" id="2.1.1.166"/>
    </reaction>
</comment>
<comment type="subcellular location">
    <subcellularLocation>
        <location evidence="1">Cytoplasm</location>
    </subcellularLocation>
</comment>
<comment type="similarity">
    <text evidence="1">Belongs to the class I-like SAM-binding methyltransferase superfamily. RNA methyltransferase RlmE family.</text>
</comment>
<keyword id="KW-0963">Cytoplasm</keyword>
<keyword id="KW-0489">Methyltransferase</keyword>
<keyword id="KW-0698">rRNA processing</keyword>
<keyword id="KW-0949">S-adenosyl-L-methionine</keyword>
<keyword id="KW-0808">Transferase</keyword>
<evidence type="ECO:0000255" key="1">
    <source>
        <dbReference type="HAMAP-Rule" id="MF_01547"/>
    </source>
</evidence>
<evidence type="ECO:0000256" key="2">
    <source>
        <dbReference type="SAM" id="MobiDB-lite"/>
    </source>
</evidence>
<reference key="1">
    <citation type="journal article" date="2003" name="Nat. Genet.">
        <title>Comparative analysis of the genome sequences of Bordetella pertussis, Bordetella parapertussis and Bordetella bronchiseptica.</title>
        <authorList>
            <person name="Parkhill J."/>
            <person name="Sebaihia M."/>
            <person name="Preston A."/>
            <person name="Murphy L.D."/>
            <person name="Thomson N.R."/>
            <person name="Harris D.E."/>
            <person name="Holden M.T.G."/>
            <person name="Churcher C.M."/>
            <person name="Bentley S.D."/>
            <person name="Mungall K.L."/>
            <person name="Cerdeno-Tarraga A.-M."/>
            <person name="Temple L."/>
            <person name="James K.D."/>
            <person name="Harris B."/>
            <person name="Quail M.A."/>
            <person name="Achtman M."/>
            <person name="Atkin R."/>
            <person name="Baker S."/>
            <person name="Basham D."/>
            <person name="Bason N."/>
            <person name="Cherevach I."/>
            <person name="Chillingworth T."/>
            <person name="Collins M."/>
            <person name="Cronin A."/>
            <person name="Davis P."/>
            <person name="Doggett J."/>
            <person name="Feltwell T."/>
            <person name="Goble A."/>
            <person name="Hamlin N."/>
            <person name="Hauser H."/>
            <person name="Holroyd S."/>
            <person name="Jagels K."/>
            <person name="Leather S."/>
            <person name="Moule S."/>
            <person name="Norberczak H."/>
            <person name="O'Neil S."/>
            <person name="Ormond D."/>
            <person name="Price C."/>
            <person name="Rabbinowitsch E."/>
            <person name="Rutter S."/>
            <person name="Sanders M."/>
            <person name="Saunders D."/>
            <person name="Seeger K."/>
            <person name="Sharp S."/>
            <person name="Simmonds M."/>
            <person name="Skelton J."/>
            <person name="Squares R."/>
            <person name="Squares S."/>
            <person name="Stevens K."/>
            <person name="Unwin L."/>
            <person name="Whitehead S."/>
            <person name="Barrell B.G."/>
            <person name="Maskell D.J."/>
        </authorList>
    </citation>
    <scope>NUCLEOTIDE SEQUENCE [LARGE SCALE GENOMIC DNA]</scope>
    <source>
        <strain>ATCC BAA-588 / NCTC 13252 / RB50</strain>
    </source>
</reference>